<feature type="signal peptide" evidence="2">
    <location>
        <begin position="1"/>
        <end position="26"/>
    </location>
</feature>
<feature type="chain" id="PRO_0000386567" description="Protein cueball" evidence="2">
    <location>
        <begin position="27"/>
        <end position="704"/>
    </location>
</feature>
<feature type="topological domain" description="Extracellular" evidence="2">
    <location>
        <begin position="27"/>
        <end position="594"/>
    </location>
</feature>
<feature type="transmembrane region" description="Helical" evidence="2">
    <location>
        <begin position="595"/>
        <end position="615"/>
    </location>
</feature>
<feature type="topological domain" description="Cytoplasmic" evidence="2">
    <location>
        <begin position="616"/>
        <end position="704"/>
    </location>
</feature>
<feature type="repeat" description="LDL-receptor class B 1" evidence="2">
    <location>
        <begin position="69"/>
        <end position="119"/>
    </location>
</feature>
<feature type="repeat" description="LDL-receptor class B 2" evidence="2">
    <location>
        <begin position="120"/>
        <end position="166"/>
    </location>
</feature>
<feature type="repeat" description="LDL-receptor class B 3" evidence="2">
    <location>
        <begin position="199"/>
        <end position="242"/>
    </location>
</feature>
<feature type="repeat" description="LDL-receptor class B 4" evidence="2">
    <location>
        <begin position="243"/>
        <end position="288"/>
    </location>
</feature>
<feature type="domain" description="EGF-like 1" evidence="3">
    <location>
        <begin position="363"/>
        <end position="397"/>
    </location>
</feature>
<feature type="domain" description="EGF-like 2" evidence="3">
    <location>
        <begin position="432"/>
        <end position="478"/>
    </location>
</feature>
<feature type="domain" description="EGF-like 3" evidence="3">
    <location>
        <begin position="514"/>
        <end position="551"/>
    </location>
</feature>
<feature type="glycosylation site" description="N-linked (GlcNAc...) asparagine" evidence="2">
    <location>
        <position position="152"/>
    </location>
</feature>
<feature type="glycosylation site" description="N-linked (GlcNAc...) asparagine" evidence="2">
    <location>
        <position position="219"/>
    </location>
</feature>
<feature type="glycosylation site" description="N-linked (GlcNAc...) asparagine" evidence="2">
    <location>
        <position position="375"/>
    </location>
</feature>
<feature type="glycosylation site" description="N-linked (GlcNAc...) asparagine" evidence="2">
    <location>
        <position position="450"/>
    </location>
</feature>
<feature type="glycosylation site" description="N-linked (GlcNAc...) asparagine" evidence="2">
    <location>
        <position position="532"/>
    </location>
</feature>
<feature type="glycosylation site" description="N-linked (GlcNAc...) asparagine" evidence="2">
    <location>
        <position position="592"/>
    </location>
</feature>
<feature type="disulfide bond" evidence="3">
    <location>
        <begin position="372"/>
        <end position="385"/>
    </location>
</feature>
<feature type="disulfide bond" evidence="3">
    <location>
        <begin position="387"/>
        <end position="396"/>
    </location>
</feature>
<feature type="disulfide bond" evidence="3">
    <location>
        <begin position="436"/>
        <end position="446"/>
    </location>
</feature>
<feature type="disulfide bond" evidence="3">
    <location>
        <begin position="440"/>
        <end position="465"/>
    </location>
</feature>
<feature type="disulfide bond" evidence="3">
    <location>
        <begin position="467"/>
        <end position="477"/>
    </location>
</feature>
<feature type="disulfide bond" evidence="3">
    <location>
        <begin position="518"/>
        <end position="528"/>
    </location>
</feature>
<feature type="disulfide bond" evidence="3">
    <location>
        <begin position="522"/>
        <end position="539"/>
    </location>
</feature>
<feature type="disulfide bond" evidence="3">
    <location>
        <begin position="541"/>
        <end position="550"/>
    </location>
</feature>
<protein>
    <recommendedName>
        <fullName evidence="1">Protein cueball</fullName>
    </recommendedName>
</protein>
<keyword id="KW-1003">Cell membrane</keyword>
<keyword id="KW-0221">Differentiation</keyword>
<keyword id="KW-1015">Disulfide bond</keyword>
<keyword id="KW-0245">EGF-like domain</keyword>
<keyword id="KW-0325">Glycoprotein</keyword>
<keyword id="KW-0472">Membrane</keyword>
<keyword id="KW-0896">Oogenesis</keyword>
<keyword id="KW-1185">Reference proteome</keyword>
<keyword id="KW-0677">Repeat</keyword>
<keyword id="KW-0732">Signal</keyword>
<keyword id="KW-0744">Spermatogenesis</keyword>
<keyword id="KW-0812">Transmembrane</keyword>
<keyword id="KW-1133">Transmembrane helix</keyword>
<accession>Q7QIQ6</accession>
<evidence type="ECO:0000250" key="1">
    <source>
        <dbReference type="UniProtKB" id="Q95RU0"/>
    </source>
</evidence>
<evidence type="ECO:0000255" key="2"/>
<evidence type="ECO:0000255" key="3">
    <source>
        <dbReference type="PROSITE-ProRule" id="PRU00076"/>
    </source>
</evidence>
<evidence type="ECO:0000305" key="4"/>
<evidence type="ECO:0000312" key="5">
    <source>
        <dbReference type="EMBL" id="EAA04702.4"/>
    </source>
</evidence>
<organism>
    <name type="scientific">Anopheles gambiae</name>
    <name type="common">African malaria mosquito</name>
    <dbReference type="NCBI Taxonomy" id="7165"/>
    <lineage>
        <taxon>Eukaryota</taxon>
        <taxon>Metazoa</taxon>
        <taxon>Ecdysozoa</taxon>
        <taxon>Arthropoda</taxon>
        <taxon>Hexapoda</taxon>
        <taxon>Insecta</taxon>
        <taxon>Pterygota</taxon>
        <taxon>Neoptera</taxon>
        <taxon>Endopterygota</taxon>
        <taxon>Diptera</taxon>
        <taxon>Nematocera</taxon>
        <taxon>Culicoidea</taxon>
        <taxon>Culicidae</taxon>
        <taxon>Anophelinae</taxon>
        <taxon>Anopheles</taxon>
    </lineage>
</organism>
<sequence>MKSPCRAAAGWLVLLLSSCCLGYVIATEWAAAVTTDNGILFFDSNWRKISSAAHQYSRISAFAYDEVLGKLYFADLDHPEYRLFALDYDDTDELHKVTKLLPKSAQTAYISGMAFDHLERRLYWTEKGTRSVYYVAIDELLSSTRSAAAAANGTAAAAATAVEATTSAPPPSSSSPVQLVATVQPDHELAGLAIDECRRHLYWTNCYPKTSNIVRAAMNGTVLNVHEEQVYLPKGITVDHYRNRLYWVEKKYGRRYTIESADLEVNDQRTLQTGLDRLPADIAVKNDYIYWTDQENNEIYEMSKEPNAPSRTVYRGEHPSAVILRANLLLEHQRNNPDCRSVVDRILENMQNSKPASVLQQETQQQGQLTVCLNNGTVNHHTNTCLCQPAFGGKLCEIDLCNNYCAQGSCRIGRDNRPRCDCDRRYEGDRCDRNRCDGFCLNGGRCQFSNGTAGRTEEEMGDRTCLCESTGYSGARCENPICGTDYCYNGECYVEEGKRPKCRCKAGYRGERCEEYSCNNYCLNGGHCTLGNETTVPECECGEEFAGQRCEIAVRLCSTYNEDPQWQQYCLGISKTLPLMEPKVTYCKESFNRTVVYTSLCFTVSFALLLAVVLVVSRMMKPPRPRITKKMVVTPMTSRPPTTQCEITIENCCNMNVCETPCFDTKLLKKSKKEDKQFLLEDIEDVGGSYRKLPNCGDGTAERK</sequence>
<reference evidence="5" key="1">
    <citation type="journal article" date="2002" name="Science">
        <title>The genome sequence of the malaria mosquito Anopheles gambiae.</title>
        <authorList>
            <person name="Holt R.A."/>
            <person name="Subramanian G.M."/>
            <person name="Halpern A."/>
            <person name="Sutton G.G."/>
            <person name="Charlab R."/>
            <person name="Nusskern D.R."/>
            <person name="Wincker P."/>
            <person name="Clark A.G."/>
            <person name="Ribeiro J.M.C."/>
            <person name="Wides R."/>
            <person name="Salzberg S.L."/>
            <person name="Loftus B.J."/>
            <person name="Yandell M.D."/>
            <person name="Majoros W.H."/>
            <person name="Rusch D.B."/>
            <person name="Lai Z."/>
            <person name="Kraft C.L."/>
            <person name="Abril J.F."/>
            <person name="Anthouard V."/>
            <person name="Arensburger P."/>
            <person name="Atkinson P.W."/>
            <person name="Baden H."/>
            <person name="de Berardinis V."/>
            <person name="Baldwin D."/>
            <person name="Benes V."/>
            <person name="Biedler J."/>
            <person name="Blass C."/>
            <person name="Bolanos R."/>
            <person name="Boscus D."/>
            <person name="Barnstead M."/>
            <person name="Cai S."/>
            <person name="Center A."/>
            <person name="Chaturverdi K."/>
            <person name="Christophides G.K."/>
            <person name="Chrystal M.A.M."/>
            <person name="Clamp M."/>
            <person name="Cravchik A."/>
            <person name="Curwen V."/>
            <person name="Dana A."/>
            <person name="Delcher A."/>
            <person name="Dew I."/>
            <person name="Evans C.A."/>
            <person name="Flanigan M."/>
            <person name="Grundschober-Freimoser A."/>
            <person name="Friedli L."/>
            <person name="Gu Z."/>
            <person name="Guan P."/>
            <person name="Guigo R."/>
            <person name="Hillenmeyer M.E."/>
            <person name="Hladun S.L."/>
            <person name="Hogan J.R."/>
            <person name="Hong Y.S."/>
            <person name="Hoover J."/>
            <person name="Jaillon O."/>
            <person name="Ke Z."/>
            <person name="Kodira C.D."/>
            <person name="Kokoza E."/>
            <person name="Koutsos A."/>
            <person name="Letunic I."/>
            <person name="Levitsky A.A."/>
            <person name="Liang Y."/>
            <person name="Lin J.-J."/>
            <person name="Lobo N.F."/>
            <person name="Lopez J.R."/>
            <person name="Malek J.A."/>
            <person name="McIntosh T.C."/>
            <person name="Meister S."/>
            <person name="Miller J.R."/>
            <person name="Mobarry C."/>
            <person name="Mongin E."/>
            <person name="Murphy S.D."/>
            <person name="O'Brochta D.A."/>
            <person name="Pfannkoch C."/>
            <person name="Qi R."/>
            <person name="Regier M.A."/>
            <person name="Remington K."/>
            <person name="Shao H."/>
            <person name="Sharakhova M.V."/>
            <person name="Sitter C.D."/>
            <person name="Shetty J."/>
            <person name="Smith T.J."/>
            <person name="Strong R."/>
            <person name="Sun J."/>
            <person name="Thomasova D."/>
            <person name="Ton L.Q."/>
            <person name="Topalis P."/>
            <person name="Tu Z.J."/>
            <person name="Unger M.F."/>
            <person name="Walenz B."/>
            <person name="Wang A.H."/>
            <person name="Wang J."/>
            <person name="Wang M."/>
            <person name="Wang X."/>
            <person name="Woodford K.J."/>
            <person name="Wortman J.R."/>
            <person name="Wu M."/>
            <person name="Yao A."/>
            <person name="Zdobnov E.M."/>
            <person name="Zhang H."/>
            <person name="Zhao Q."/>
            <person name="Zhao S."/>
            <person name="Zhu S.C."/>
            <person name="Zhimulev I."/>
            <person name="Coluzzi M."/>
            <person name="della Torre A."/>
            <person name="Roth C.W."/>
            <person name="Louis C."/>
            <person name="Kalush F."/>
            <person name="Mural R.J."/>
            <person name="Myers E.W."/>
            <person name="Adams M.D."/>
            <person name="Smith H.O."/>
            <person name="Broder S."/>
            <person name="Gardner M.J."/>
            <person name="Fraser C.M."/>
            <person name="Birney E."/>
            <person name="Bork P."/>
            <person name="Brey P.T."/>
            <person name="Venter J.C."/>
            <person name="Weissenbach J."/>
            <person name="Kafatos F.C."/>
            <person name="Collins F.H."/>
            <person name="Hoffman S.L."/>
        </authorList>
    </citation>
    <scope>NUCLEOTIDE SEQUENCE [LARGE SCALE GENOMIC DNA]</scope>
    <source>
        <strain>PEST</strain>
    </source>
</reference>
<dbReference type="EMBL" id="AAAB01008807">
    <property type="protein sequence ID" value="EAA04702.4"/>
    <property type="molecule type" value="Genomic_DNA"/>
</dbReference>
<dbReference type="RefSeq" id="XP_308749.4">
    <property type="nucleotide sequence ID" value="XM_308749.4"/>
</dbReference>
<dbReference type="FunCoup" id="Q7QIQ6">
    <property type="interactions" value="170"/>
</dbReference>
<dbReference type="STRING" id="7165.Q7QIQ6"/>
<dbReference type="GlyCosmos" id="Q7QIQ6">
    <property type="glycosylation" value="6 sites, No reported glycans"/>
</dbReference>
<dbReference type="PaxDb" id="7165-AGAP007023-PA"/>
<dbReference type="EnsemblMetazoa" id="AGAP007023-RA">
    <property type="protein sequence ID" value="AGAP007023-PA"/>
    <property type="gene ID" value="AGAP007023"/>
</dbReference>
<dbReference type="GeneID" id="1270082"/>
<dbReference type="KEGG" id="aga:1270082"/>
<dbReference type="VEuPathDB" id="VectorBase:AGAMI1_012382"/>
<dbReference type="VEuPathDB" id="VectorBase:AGAP007023"/>
<dbReference type="eggNOG" id="KOG1215">
    <property type="taxonomic scope" value="Eukaryota"/>
</dbReference>
<dbReference type="HOGENOM" id="CLU_026602_0_0_1"/>
<dbReference type="InParanoid" id="Q7QIQ6"/>
<dbReference type="OMA" id="RCEQNST"/>
<dbReference type="PhylomeDB" id="Q7QIQ6"/>
<dbReference type="Proteomes" id="UP000007062">
    <property type="component" value="Chromosome 2L"/>
</dbReference>
<dbReference type="GO" id="GO:0005886">
    <property type="term" value="C:plasma membrane"/>
    <property type="evidence" value="ECO:0007669"/>
    <property type="project" value="UniProtKB-SubCell"/>
</dbReference>
<dbReference type="GO" id="GO:0048477">
    <property type="term" value="P:oogenesis"/>
    <property type="evidence" value="ECO:0007669"/>
    <property type="project" value="UniProtKB-KW"/>
</dbReference>
<dbReference type="GO" id="GO:0007283">
    <property type="term" value="P:spermatogenesis"/>
    <property type="evidence" value="ECO:0007669"/>
    <property type="project" value="UniProtKB-KW"/>
</dbReference>
<dbReference type="Gene3D" id="2.10.25.10">
    <property type="entry name" value="Laminin"/>
    <property type="match status" value="4"/>
</dbReference>
<dbReference type="Gene3D" id="2.120.10.30">
    <property type="entry name" value="TolB, C-terminal domain"/>
    <property type="match status" value="2"/>
</dbReference>
<dbReference type="InterPro" id="IPR011042">
    <property type="entry name" value="6-blade_b-propeller_TolB-like"/>
</dbReference>
<dbReference type="InterPro" id="IPR050778">
    <property type="entry name" value="Cueball_EGF_LRP_Nidogen"/>
</dbReference>
<dbReference type="InterPro" id="IPR000742">
    <property type="entry name" value="EGF-like_dom"/>
</dbReference>
<dbReference type="InterPro" id="IPR000033">
    <property type="entry name" value="LDLR_classB_rpt"/>
</dbReference>
<dbReference type="PANTHER" id="PTHR46513:SF42">
    <property type="entry name" value="PROTEIN CUEBALL"/>
    <property type="match status" value="1"/>
</dbReference>
<dbReference type="PANTHER" id="PTHR46513">
    <property type="entry name" value="VITELLOGENIN RECEPTOR-LIKE PROTEIN-RELATED-RELATED"/>
    <property type="match status" value="1"/>
</dbReference>
<dbReference type="SMART" id="SM00181">
    <property type="entry name" value="EGF"/>
    <property type="match status" value="5"/>
</dbReference>
<dbReference type="SMART" id="SM00135">
    <property type="entry name" value="LY"/>
    <property type="match status" value="5"/>
</dbReference>
<dbReference type="SUPFAM" id="SSF57196">
    <property type="entry name" value="EGF/Laminin"/>
    <property type="match status" value="2"/>
</dbReference>
<dbReference type="SUPFAM" id="SSF63825">
    <property type="entry name" value="YWTD domain"/>
    <property type="match status" value="1"/>
</dbReference>
<dbReference type="PROSITE" id="PS00022">
    <property type="entry name" value="EGF_1"/>
    <property type="match status" value="4"/>
</dbReference>
<dbReference type="PROSITE" id="PS01186">
    <property type="entry name" value="EGF_2"/>
    <property type="match status" value="1"/>
</dbReference>
<dbReference type="PROSITE" id="PS50026">
    <property type="entry name" value="EGF_3"/>
    <property type="match status" value="3"/>
</dbReference>
<proteinExistence type="inferred from homology"/>
<comment type="function">
    <text evidence="1">Has a role in spermatogenesis and oogenesis.</text>
</comment>
<comment type="subcellular location">
    <subcellularLocation>
        <location evidence="4">Cell membrane</location>
        <topology evidence="4">Single-pass type I membrane protein</topology>
    </subcellularLocation>
</comment>
<comment type="similarity">
    <text evidence="4">Belongs to the cueball family.</text>
</comment>
<name>CUE_ANOGA</name>
<gene>
    <name evidence="1" type="primary">cue</name>
    <name type="ORF">AGAP007023</name>
</gene>